<sequence length="133" mass="15096">MAKEFGRPQRVAQEMQKEIALILQREIKDPRLGMMTTVSGVEMSRDLAYAKVYVTFLNDKDEDAVKAGIKALQEASGFIRSLLGKAMRLRIVPELTFFYDNSLVEGMRMSNLVTSVVKHDEERRVNPDDSKEG</sequence>
<dbReference type="EMBL" id="FM180568">
    <property type="protein sequence ID" value="CAS10996.1"/>
    <property type="molecule type" value="Genomic_DNA"/>
</dbReference>
<dbReference type="RefSeq" id="WP_001040206.1">
    <property type="nucleotide sequence ID" value="NC_011601.1"/>
</dbReference>
<dbReference type="SMR" id="B7UJ62"/>
<dbReference type="KEGG" id="ecg:E2348C_3448"/>
<dbReference type="HOGENOM" id="CLU_089475_5_0_6"/>
<dbReference type="Proteomes" id="UP000008205">
    <property type="component" value="Chromosome"/>
</dbReference>
<dbReference type="GO" id="GO:0005829">
    <property type="term" value="C:cytosol"/>
    <property type="evidence" value="ECO:0007669"/>
    <property type="project" value="TreeGrafter"/>
</dbReference>
<dbReference type="GO" id="GO:0043024">
    <property type="term" value="F:ribosomal small subunit binding"/>
    <property type="evidence" value="ECO:0007669"/>
    <property type="project" value="TreeGrafter"/>
</dbReference>
<dbReference type="GO" id="GO:0030490">
    <property type="term" value="P:maturation of SSU-rRNA"/>
    <property type="evidence" value="ECO:0007669"/>
    <property type="project" value="UniProtKB-UniRule"/>
</dbReference>
<dbReference type="FunFam" id="3.30.300.20:FF:000007">
    <property type="entry name" value="Ribosome-binding factor A"/>
    <property type="match status" value="1"/>
</dbReference>
<dbReference type="Gene3D" id="3.30.300.20">
    <property type="match status" value="1"/>
</dbReference>
<dbReference type="HAMAP" id="MF_00003">
    <property type="entry name" value="RbfA"/>
    <property type="match status" value="1"/>
</dbReference>
<dbReference type="InterPro" id="IPR015946">
    <property type="entry name" value="KH_dom-like_a/b"/>
</dbReference>
<dbReference type="InterPro" id="IPR000238">
    <property type="entry name" value="RbfA"/>
</dbReference>
<dbReference type="InterPro" id="IPR023799">
    <property type="entry name" value="RbfA_dom_sf"/>
</dbReference>
<dbReference type="InterPro" id="IPR020053">
    <property type="entry name" value="Ribosome-bd_factorA_CS"/>
</dbReference>
<dbReference type="NCBIfam" id="TIGR00082">
    <property type="entry name" value="rbfA"/>
    <property type="match status" value="1"/>
</dbReference>
<dbReference type="PANTHER" id="PTHR33515">
    <property type="entry name" value="RIBOSOME-BINDING FACTOR A, CHLOROPLASTIC-RELATED"/>
    <property type="match status" value="1"/>
</dbReference>
<dbReference type="PANTHER" id="PTHR33515:SF1">
    <property type="entry name" value="RIBOSOME-BINDING FACTOR A, CHLOROPLASTIC-RELATED"/>
    <property type="match status" value="1"/>
</dbReference>
<dbReference type="Pfam" id="PF02033">
    <property type="entry name" value="RBFA"/>
    <property type="match status" value="1"/>
</dbReference>
<dbReference type="SUPFAM" id="SSF89919">
    <property type="entry name" value="Ribosome-binding factor A, RbfA"/>
    <property type="match status" value="1"/>
</dbReference>
<dbReference type="PROSITE" id="PS01319">
    <property type="entry name" value="RBFA"/>
    <property type="match status" value="1"/>
</dbReference>
<protein>
    <recommendedName>
        <fullName evidence="1">Ribosome-binding factor A</fullName>
    </recommendedName>
</protein>
<accession>B7UJ62</accession>
<proteinExistence type="inferred from homology"/>
<name>RBFA_ECO27</name>
<gene>
    <name evidence="1" type="primary">rbfA</name>
    <name type="ordered locus">E2348C_3448</name>
</gene>
<organism>
    <name type="scientific">Escherichia coli O127:H6 (strain E2348/69 / EPEC)</name>
    <dbReference type="NCBI Taxonomy" id="574521"/>
    <lineage>
        <taxon>Bacteria</taxon>
        <taxon>Pseudomonadati</taxon>
        <taxon>Pseudomonadota</taxon>
        <taxon>Gammaproteobacteria</taxon>
        <taxon>Enterobacterales</taxon>
        <taxon>Enterobacteriaceae</taxon>
        <taxon>Escherichia</taxon>
    </lineage>
</organism>
<evidence type="ECO:0000255" key="1">
    <source>
        <dbReference type="HAMAP-Rule" id="MF_00003"/>
    </source>
</evidence>
<feature type="chain" id="PRO_1000193254" description="Ribosome-binding factor A">
    <location>
        <begin position="1"/>
        <end position="133"/>
    </location>
</feature>
<reference key="1">
    <citation type="journal article" date="2009" name="J. Bacteriol.">
        <title>Complete genome sequence and comparative genome analysis of enteropathogenic Escherichia coli O127:H6 strain E2348/69.</title>
        <authorList>
            <person name="Iguchi A."/>
            <person name="Thomson N.R."/>
            <person name="Ogura Y."/>
            <person name="Saunders D."/>
            <person name="Ooka T."/>
            <person name="Henderson I.R."/>
            <person name="Harris D."/>
            <person name="Asadulghani M."/>
            <person name="Kurokawa K."/>
            <person name="Dean P."/>
            <person name="Kenny B."/>
            <person name="Quail M.A."/>
            <person name="Thurston S."/>
            <person name="Dougan G."/>
            <person name="Hayashi T."/>
            <person name="Parkhill J."/>
            <person name="Frankel G."/>
        </authorList>
    </citation>
    <scope>NUCLEOTIDE SEQUENCE [LARGE SCALE GENOMIC DNA]</scope>
    <source>
        <strain>E2348/69 / EPEC</strain>
    </source>
</reference>
<comment type="function">
    <text evidence="1">One of several proteins that assist in the late maturation steps of the functional core of the 30S ribosomal subunit. Associates with free 30S ribosomal subunits (but not with 30S subunits that are part of 70S ribosomes or polysomes). Required for efficient processing of 16S rRNA. May interact with the 5'-terminal helix region of 16S rRNA.</text>
</comment>
<comment type="subunit">
    <text evidence="1">Monomer. Binds 30S ribosomal subunits, but not 50S ribosomal subunits or 70S ribosomes.</text>
</comment>
<comment type="subcellular location">
    <subcellularLocation>
        <location evidence="1">Cytoplasm</location>
    </subcellularLocation>
</comment>
<comment type="similarity">
    <text evidence="1">Belongs to the RbfA family.</text>
</comment>
<keyword id="KW-0963">Cytoplasm</keyword>
<keyword id="KW-1185">Reference proteome</keyword>
<keyword id="KW-0690">Ribosome biogenesis</keyword>